<evidence type="ECO:0000255" key="1">
    <source>
        <dbReference type="HAMAP-Rule" id="MF_01928"/>
    </source>
</evidence>
<accession>Q8CPP2</accession>
<protein>
    <recommendedName>
        <fullName evidence="1">N5-carboxyaminoimidazole ribonucleotide synthase</fullName>
        <shortName evidence="1">N5-CAIR synthase</shortName>
        <ecNumber evidence="1">6.3.4.18</ecNumber>
    </recommendedName>
    <alternativeName>
        <fullName evidence="1">5-(carboxyamino)imidazole ribonucleotide synthetase</fullName>
    </alternativeName>
</protein>
<feature type="chain" id="PRO_0000075010" description="N5-carboxyaminoimidazole ribonucleotide synthase">
    <location>
        <begin position="1"/>
        <end position="375"/>
    </location>
</feature>
<feature type="domain" description="ATP-grasp" evidence="1">
    <location>
        <begin position="112"/>
        <end position="296"/>
    </location>
</feature>
<feature type="binding site" evidence="1">
    <location>
        <position position="108"/>
    </location>
    <ligand>
        <name>ATP</name>
        <dbReference type="ChEBI" id="CHEBI:30616"/>
    </ligand>
</feature>
<feature type="binding site" evidence="1">
    <location>
        <position position="148"/>
    </location>
    <ligand>
        <name>ATP</name>
        <dbReference type="ChEBI" id="CHEBI:30616"/>
    </ligand>
</feature>
<feature type="binding site" evidence="1">
    <location>
        <begin position="153"/>
        <end position="159"/>
    </location>
    <ligand>
        <name>ATP</name>
        <dbReference type="ChEBI" id="CHEBI:30616"/>
    </ligand>
</feature>
<feature type="binding site" evidence="1">
    <location>
        <begin position="183"/>
        <end position="186"/>
    </location>
    <ligand>
        <name>ATP</name>
        <dbReference type="ChEBI" id="CHEBI:30616"/>
    </ligand>
</feature>
<feature type="binding site" evidence="1">
    <location>
        <position position="191"/>
    </location>
    <ligand>
        <name>ATP</name>
        <dbReference type="ChEBI" id="CHEBI:30616"/>
    </ligand>
</feature>
<feature type="binding site" evidence="1">
    <location>
        <position position="214"/>
    </location>
    <ligand>
        <name>ATP</name>
        <dbReference type="ChEBI" id="CHEBI:30616"/>
    </ligand>
</feature>
<feature type="binding site" evidence="1">
    <location>
        <begin position="266"/>
        <end position="267"/>
    </location>
    <ligand>
        <name>ATP</name>
        <dbReference type="ChEBI" id="CHEBI:30616"/>
    </ligand>
</feature>
<gene>
    <name evidence="1" type="primary">purK</name>
    <name type="ordered locus">SE_0763</name>
</gene>
<dbReference type="EC" id="6.3.4.18" evidence="1"/>
<dbReference type="EMBL" id="AE015929">
    <property type="protein sequence ID" value="AAO04360.1"/>
    <property type="molecule type" value="Genomic_DNA"/>
</dbReference>
<dbReference type="RefSeq" id="NP_764318.1">
    <property type="nucleotide sequence ID" value="NC_004461.1"/>
</dbReference>
<dbReference type="RefSeq" id="WP_001831674.1">
    <property type="nucleotide sequence ID" value="NZ_WBME01000028.1"/>
</dbReference>
<dbReference type="SMR" id="Q8CPP2"/>
<dbReference type="KEGG" id="sep:SE_0763"/>
<dbReference type="PATRIC" id="fig|176280.10.peg.735"/>
<dbReference type="eggNOG" id="COG0026">
    <property type="taxonomic scope" value="Bacteria"/>
</dbReference>
<dbReference type="HOGENOM" id="CLU_011534_0_1_9"/>
<dbReference type="OrthoDB" id="9804625at2"/>
<dbReference type="UniPathway" id="UPA00074">
    <property type="reaction ID" value="UER00942"/>
</dbReference>
<dbReference type="Proteomes" id="UP000001411">
    <property type="component" value="Chromosome"/>
</dbReference>
<dbReference type="GO" id="GO:0005829">
    <property type="term" value="C:cytosol"/>
    <property type="evidence" value="ECO:0007669"/>
    <property type="project" value="TreeGrafter"/>
</dbReference>
<dbReference type="GO" id="GO:0034028">
    <property type="term" value="F:5-(carboxyamino)imidazole ribonucleotide synthase activity"/>
    <property type="evidence" value="ECO:0007669"/>
    <property type="project" value="UniProtKB-UniRule"/>
</dbReference>
<dbReference type="GO" id="GO:0005524">
    <property type="term" value="F:ATP binding"/>
    <property type="evidence" value="ECO:0007669"/>
    <property type="project" value="UniProtKB-KW"/>
</dbReference>
<dbReference type="GO" id="GO:0046872">
    <property type="term" value="F:metal ion binding"/>
    <property type="evidence" value="ECO:0007669"/>
    <property type="project" value="InterPro"/>
</dbReference>
<dbReference type="GO" id="GO:0004638">
    <property type="term" value="F:phosphoribosylaminoimidazole carboxylase activity"/>
    <property type="evidence" value="ECO:0007669"/>
    <property type="project" value="InterPro"/>
</dbReference>
<dbReference type="GO" id="GO:0006189">
    <property type="term" value="P:'de novo' IMP biosynthetic process"/>
    <property type="evidence" value="ECO:0007669"/>
    <property type="project" value="UniProtKB-UniRule"/>
</dbReference>
<dbReference type="FunFam" id="3.30.1490.20:FF:000015">
    <property type="entry name" value="N5-carboxyaminoimidazole ribonucleotide synthase"/>
    <property type="match status" value="1"/>
</dbReference>
<dbReference type="FunFam" id="3.40.50.20:FF:000016">
    <property type="entry name" value="N5-carboxyaminoimidazole ribonucleotide synthase"/>
    <property type="match status" value="1"/>
</dbReference>
<dbReference type="Gene3D" id="3.40.50.20">
    <property type="match status" value="1"/>
</dbReference>
<dbReference type="Gene3D" id="3.30.1490.20">
    <property type="entry name" value="ATP-grasp fold, A domain"/>
    <property type="match status" value="1"/>
</dbReference>
<dbReference type="Gene3D" id="3.30.470.20">
    <property type="entry name" value="ATP-grasp fold, B domain"/>
    <property type="match status" value="1"/>
</dbReference>
<dbReference type="HAMAP" id="MF_01928">
    <property type="entry name" value="PurK"/>
    <property type="match status" value="1"/>
</dbReference>
<dbReference type="InterPro" id="IPR011761">
    <property type="entry name" value="ATP-grasp"/>
</dbReference>
<dbReference type="InterPro" id="IPR003135">
    <property type="entry name" value="ATP-grasp_carboxylate-amine"/>
</dbReference>
<dbReference type="InterPro" id="IPR013815">
    <property type="entry name" value="ATP_grasp_subdomain_1"/>
</dbReference>
<dbReference type="InterPro" id="IPR016185">
    <property type="entry name" value="PreATP-grasp_dom_sf"/>
</dbReference>
<dbReference type="InterPro" id="IPR005875">
    <property type="entry name" value="PurK"/>
</dbReference>
<dbReference type="InterPro" id="IPR040686">
    <property type="entry name" value="PurK_C"/>
</dbReference>
<dbReference type="InterPro" id="IPR054350">
    <property type="entry name" value="PurT/PurK_preATP-grasp"/>
</dbReference>
<dbReference type="InterPro" id="IPR011054">
    <property type="entry name" value="Rudment_hybrid_motif"/>
</dbReference>
<dbReference type="NCBIfam" id="NF004675">
    <property type="entry name" value="PRK06019.1-1"/>
    <property type="match status" value="1"/>
</dbReference>
<dbReference type="NCBIfam" id="NF004679">
    <property type="entry name" value="PRK06019.1-5"/>
    <property type="match status" value="1"/>
</dbReference>
<dbReference type="NCBIfam" id="TIGR01161">
    <property type="entry name" value="purK"/>
    <property type="match status" value="1"/>
</dbReference>
<dbReference type="PANTHER" id="PTHR11609:SF5">
    <property type="entry name" value="PHOSPHORIBOSYLAMINOIMIDAZOLE CARBOXYLASE"/>
    <property type="match status" value="1"/>
</dbReference>
<dbReference type="PANTHER" id="PTHR11609">
    <property type="entry name" value="PURINE BIOSYNTHESIS PROTEIN 6/7, PUR6/7"/>
    <property type="match status" value="1"/>
</dbReference>
<dbReference type="Pfam" id="PF02222">
    <property type="entry name" value="ATP-grasp"/>
    <property type="match status" value="1"/>
</dbReference>
<dbReference type="Pfam" id="PF17769">
    <property type="entry name" value="PurK_C"/>
    <property type="match status" value="1"/>
</dbReference>
<dbReference type="Pfam" id="PF22660">
    <property type="entry name" value="RS_preATP-grasp-like"/>
    <property type="match status" value="1"/>
</dbReference>
<dbReference type="SUPFAM" id="SSF56059">
    <property type="entry name" value="Glutathione synthetase ATP-binding domain-like"/>
    <property type="match status" value="1"/>
</dbReference>
<dbReference type="SUPFAM" id="SSF52440">
    <property type="entry name" value="PreATP-grasp domain"/>
    <property type="match status" value="1"/>
</dbReference>
<dbReference type="SUPFAM" id="SSF51246">
    <property type="entry name" value="Rudiment single hybrid motif"/>
    <property type="match status" value="1"/>
</dbReference>
<dbReference type="PROSITE" id="PS50975">
    <property type="entry name" value="ATP_GRASP"/>
    <property type="match status" value="1"/>
</dbReference>
<reference key="1">
    <citation type="journal article" date="2003" name="Mol. Microbiol.">
        <title>Genome-based analysis of virulence genes in a non-biofilm-forming Staphylococcus epidermidis strain (ATCC 12228).</title>
        <authorList>
            <person name="Zhang Y.-Q."/>
            <person name="Ren S.-X."/>
            <person name="Li H.-L."/>
            <person name="Wang Y.-X."/>
            <person name="Fu G."/>
            <person name="Yang J."/>
            <person name="Qin Z.-Q."/>
            <person name="Miao Y.-G."/>
            <person name="Wang W.-Y."/>
            <person name="Chen R.-S."/>
            <person name="Shen Y."/>
            <person name="Chen Z."/>
            <person name="Yuan Z.-H."/>
            <person name="Zhao G.-P."/>
            <person name="Qu D."/>
            <person name="Danchin A."/>
            <person name="Wen Y.-M."/>
        </authorList>
    </citation>
    <scope>NUCLEOTIDE SEQUENCE [LARGE SCALE GENOMIC DNA]</scope>
    <source>
        <strain>ATCC 12228 / FDA PCI 1200</strain>
    </source>
</reference>
<sequence>MNFSKLKFGATIGIIGGGQLGKMMAQSAQKMGYKVIVLDPNEDCPCRYVAHQFIHANYDDEQALNQLGENSDVVTYEFENISSEQLKKLTQLYHIPQGYQAIELLQDRLTEKQTLLEANTQIVPFVQIQTNQDLLKAIEKLGFPFIVKTRFGGYDGKGQILVRNDSELDEAYQLVEKQECVAEQYLDIQKEVSLTVTIGNEQQTTYFPLQENEHQNQILFKTVVPARSDKENEARKEVEKITRAIHFVGTFTVEFFIDKENNLYVNEIAPRPHNSGHYSIEACDYSQFDTHILAITGQKLPQAIELLKPTVMMNLLGRDLDLLENEFSRHPDWHIHIYGKKERKPDRKMGHMTLLTDDVNQTEQYMLMKFEGRDK</sequence>
<organism>
    <name type="scientific">Staphylococcus epidermidis (strain ATCC 12228 / FDA PCI 1200)</name>
    <dbReference type="NCBI Taxonomy" id="176280"/>
    <lineage>
        <taxon>Bacteria</taxon>
        <taxon>Bacillati</taxon>
        <taxon>Bacillota</taxon>
        <taxon>Bacilli</taxon>
        <taxon>Bacillales</taxon>
        <taxon>Staphylococcaceae</taxon>
        <taxon>Staphylococcus</taxon>
    </lineage>
</organism>
<proteinExistence type="inferred from homology"/>
<keyword id="KW-0067">ATP-binding</keyword>
<keyword id="KW-0436">Ligase</keyword>
<keyword id="KW-0547">Nucleotide-binding</keyword>
<keyword id="KW-0658">Purine biosynthesis</keyword>
<comment type="function">
    <text evidence="1">Catalyzes the ATP-dependent conversion of 5-aminoimidazole ribonucleotide (AIR) and HCO(3)(-) to N5-carboxyaminoimidazole ribonucleotide (N5-CAIR).</text>
</comment>
<comment type="catalytic activity">
    <reaction evidence="1">
        <text>5-amino-1-(5-phospho-beta-D-ribosyl)imidazole + hydrogencarbonate + ATP = 5-carboxyamino-1-(5-phospho-D-ribosyl)imidazole + ADP + phosphate + 2 H(+)</text>
        <dbReference type="Rhea" id="RHEA:19317"/>
        <dbReference type="ChEBI" id="CHEBI:15378"/>
        <dbReference type="ChEBI" id="CHEBI:17544"/>
        <dbReference type="ChEBI" id="CHEBI:30616"/>
        <dbReference type="ChEBI" id="CHEBI:43474"/>
        <dbReference type="ChEBI" id="CHEBI:58730"/>
        <dbReference type="ChEBI" id="CHEBI:137981"/>
        <dbReference type="ChEBI" id="CHEBI:456216"/>
        <dbReference type="EC" id="6.3.4.18"/>
    </reaction>
</comment>
<comment type="pathway">
    <text evidence="1">Purine metabolism; IMP biosynthesis via de novo pathway; 5-amino-1-(5-phospho-D-ribosyl)imidazole-4-carboxylate from 5-amino-1-(5-phospho-D-ribosyl)imidazole (N5-CAIR route): step 1/2.</text>
</comment>
<comment type="subunit">
    <text evidence="1">Homodimer.</text>
</comment>
<comment type="similarity">
    <text evidence="1">Belongs to the PurK/PurT family.</text>
</comment>
<name>PURK_STAES</name>